<evidence type="ECO:0000250" key="1">
    <source>
        <dbReference type="UniProtKB" id="A0A6M3VXD3"/>
    </source>
</evidence>
<feature type="chain" id="PRO_0000342289" description="Putative capsid protein">
    <location>
        <begin position="1"/>
        <end position="134"/>
    </location>
</feature>
<keyword id="KW-0167">Capsid protein</keyword>
<keyword id="KW-0238">DNA-binding</keyword>
<keyword id="KW-1139">Helical capsid protein</keyword>
<keyword id="KW-1185">Reference proteome</keyword>
<keyword id="KW-0946">Virion</keyword>
<protein>
    <recommendedName>
        <fullName>Putative capsid protein</fullName>
    </recommendedName>
</protein>
<gene>
    <name type="ORF">134</name>
</gene>
<name>CAPSD_SIRV1</name>
<comment type="function">
    <text evidence="1">Self-assembles to form a helical, filamentous nucleocapsid. The capsid proteins wrap around the DNA and maintain it in an A-form by non-specific desolvation and specific coordination of the DNA phosphate groups by positively charged residues. This certainly protects the viral DNA under conditions such as the extreme desiccation of its host.</text>
</comment>
<comment type="subunit">
    <text evidence="1">Homodimer.</text>
</comment>
<comment type="subcellular location">
    <subcellularLocation>
        <location evidence="1">Virion</location>
    </subcellularLocation>
</comment>
<comment type="domain">
    <text evidence="1">The N-terminus projects into a DNA groove.</text>
</comment>
<proteinExistence type="inferred from homology"/>
<reference key="1">
    <citation type="journal article" date="2001" name="Virology">
        <title>Sequences and replication of genomes of the archaeal rudiviruses SIRV1 and SIRV2: relationships to the archaeal lipothrixvirus SIFV and some eukaryal viruses.</title>
        <authorList>
            <person name="Peng X."/>
            <person name="Blum H."/>
            <person name="She Q."/>
            <person name="Mallok S."/>
            <person name="Bruegger K."/>
            <person name="Garrett R.A."/>
            <person name="Zillig W."/>
            <person name="Prangishvili D."/>
        </authorList>
    </citation>
    <scope>NUCLEOTIDE SEQUENCE [LARGE SCALE GENOMIC DNA]</scope>
    <source>
        <strain>Isolate variant VIII</strain>
    </source>
</reference>
<reference key="2">
    <citation type="journal article" date="2004" name="Mol. Microbiol.">
        <title>Multiple variants of the archaeal DNA rudivirus SIRV1 in a single host and a novel mechanism of genomic variation.</title>
        <authorList>
            <person name="Peng X."/>
            <person name="Kessler A."/>
            <person name="Phan H."/>
            <person name="Garrett R.A."/>
            <person name="Prangishvili D."/>
        </authorList>
    </citation>
    <scope>NUCLEOTIDE SEQUENCE [LARGE SCALE GENOMIC DNA]</scope>
    <source>
        <strain>Isolate variant XX</strain>
    </source>
</reference>
<organism>
    <name type="scientific">Sulfolobus islandicus rod-shaped virus 1</name>
    <name type="common">SIRV-1</name>
    <name type="synonym">Sulfolobus virus SIRV-1</name>
    <dbReference type="NCBI Taxonomy" id="157898"/>
    <lineage>
        <taxon>Viruses</taxon>
        <taxon>Adnaviria</taxon>
        <taxon>Zilligvirae</taxon>
        <taxon>Taleaviricota</taxon>
        <taxon>Tokiviricetes</taxon>
        <taxon>Ligamenvirales</taxon>
        <taxon>Rudiviridae</taxon>
        <taxon>Icerudivirus</taxon>
        <taxon>Icerudivirus SIRV1</taxon>
    </lineage>
</organism>
<organismHost>
    <name type="scientific">Saccharolobus islandicus</name>
    <name type="common">Sulfolobus islandicus</name>
    <dbReference type="NCBI Taxonomy" id="43080"/>
</organismHost>
<dbReference type="EMBL" id="AJ414696">
    <property type="protein sequence ID" value="CAC93974.1"/>
    <property type="molecule type" value="Genomic_DNA"/>
</dbReference>
<dbReference type="EMBL" id="AJ748296">
    <property type="protein sequence ID" value="CAG38838.1"/>
    <property type="molecule type" value="Genomic_DNA"/>
</dbReference>
<dbReference type="RefSeq" id="NP_666607.1">
    <property type="nucleotide sequence ID" value="NC_004087.1"/>
</dbReference>
<dbReference type="SMR" id="Q8QL36"/>
<dbReference type="KEGG" id="vg:951362"/>
<dbReference type="OrthoDB" id="14070at10239"/>
<dbReference type="Proteomes" id="UP000002270">
    <property type="component" value="Genome"/>
</dbReference>
<dbReference type="Proteomes" id="UP000223181">
    <property type="component" value="Segment"/>
</dbReference>
<dbReference type="GO" id="GO:0019029">
    <property type="term" value="C:helical viral capsid"/>
    <property type="evidence" value="ECO:0007669"/>
    <property type="project" value="UniProtKB-KW"/>
</dbReference>
<dbReference type="GO" id="GO:0003677">
    <property type="term" value="F:DNA binding"/>
    <property type="evidence" value="ECO:0007669"/>
    <property type="project" value="UniProtKB-KW"/>
</dbReference>
<dbReference type="Gene3D" id="1.20.58.800">
    <property type="match status" value="1"/>
</dbReference>
<dbReference type="InterPro" id="IPR022014">
    <property type="entry name" value="Sulfobus_virus_coat_C"/>
</dbReference>
<dbReference type="Pfam" id="PF12193">
    <property type="entry name" value="Sulf_coat_C"/>
    <property type="match status" value="1"/>
</dbReference>
<sequence length="134" mass="14388">MAKGHTKRSYSQRYAKWQAKFNAFSNPTVASTILSNVAPVAQQNFQTNVPTFTAVNENVSAVLSQYGITGPNRAIYQGFGLKIARALNRIGSGPALVNMINGLKSYYISAFNANPQVLDAVVNIITGSPTGYVS</sequence>
<accession>Q8QL36</accession>
<accession>Q5TJA0</accession>